<accession>C4ZT10</accession>
<comment type="function">
    <text evidence="1">Catalyzes the dehydration of D-mannonate.</text>
</comment>
<comment type="catalytic activity">
    <reaction evidence="1">
        <text>D-mannonate = 2-dehydro-3-deoxy-D-gluconate + H2O</text>
        <dbReference type="Rhea" id="RHEA:20097"/>
        <dbReference type="ChEBI" id="CHEBI:15377"/>
        <dbReference type="ChEBI" id="CHEBI:17767"/>
        <dbReference type="ChEBI" id="CHEBI:57990"/>
        <dbReference type="EC" id="4.2.1.8"/>
    </reaction>
</comment>
<comment type="cofactor">
    <cofactor evidence="1">
        <name>Fe(2+)</name>
        <dbReference type="ChEBI" id="CHEBI:29033"/>
    </cofactor>
    <cofactor evidence="1">
        <name>Mn(2+)</name>
        <dbReference type="ChEBI" id="CHEBI:29035"/>
    </cofactor>
</comment>
<comment type="pathway">
    <text evidence="1">Carbohydrate metabolism; pentose and glucuronate interconversion.</text>
</comment>
<comment type="similarity">
    <text evidence="1">Belongs to the mannonate dehydratase family.</text>
</comment>
<organism>
    <name type="scientific">Escherichia coli (strain K12 / MC4100 / BW2952)</name>
    <dbReference type="NCBI Taxonomy" id="595496"/>
    <lineage>
        <taxon>Bacteria</taxon>
        <taxon>Pseudomonadati</taxon>
        <taxon>Pseudomonadota</taxon>
        <taxon>Gammaproteobacteria</taxon>
        <taxon>Enterobacterales</taxon>
        <taxon>Enterobacteriaceae</taxon>
        <taxon>Escherichia</taxon>
    </lineage>
</organism>
<gene>
    <name evidence="1" type="primary">uxuA</name>
    <name type="ordered locus">BWG_4020</name>
</gene>
<dbReference type="EC" id="4.2.1.8" evidence="1"/>
<dbReference type="EMBL" id="CP001396">
    <property type="protein sequence ID" value="ACR63722.1"/>
    <property type="molecule type" value="Genomic_DNA"/>
</dbReference>
<dbReference type="RefSeq" id="WP_000438562.1">
    <property type="nucleotide sequence ID" value="NC_012759.1"/>
</dbReference>
<dbReference type="SMR" id="C4ZT10"/>
<dbReference type="KEGG" id="ebw:BWG_4020"/>
<dbReference type="HOGENOM" id="CLU_058621_2_0_6"/>
<dbReference type="UniPathway" id="UPA00246"/>
<dbReference type="GO" id="GO:0008198">
    <property type="term" value="F:ferrous iron binding"/>
    <property type="evidence" value="ECO:0007669"/>
    <property type="project" value="TreeGrafter"/>
</dbReference>
<dbReference type="GO" id="GO:0030145">
    <property type="term" value="F:manganese ion binding"/>
    <property type="evidence" value="ECO:0007669"/>
    <property type="project" value="TreeGrafter"/>
</dbReference>
<dbReference type="GO" id="GO:0008927">
    <property type="term" value="F:mannonate dehydratase activity"/>
    <property type="evidence" value="ECO:0007669"/>
    <property type="project" value="UniProtKB-UniRule"/>
</dbReference>
<dbReference type="GO" id="GO:0042840">
    <property type="term" value="P:D-glucuronate catabolic process"/>
    <property type="evidence" value="ECO:0007669"/>
    <property type="project" value="TreeGrafter"/>
</dbReference>
<dbReference type="FunFam" id="3.20.20.150:FF:000004">
    <property type="entry name" value="Mannonate dehydratase"/>
    <property type="match status" value="1"/>
</dbReference>
<dbReference type="FunFam" id="3.20.20.150:FF:000005">
    <property type="entry name" value="Mannonate dehydratase"/>
    <property type="match status" value="1"/>
</dbReference>
<dbReference type="Gene3D" id="3.20.20.150">
    <property type="entry name" value="Divalent-metal-dependent TIM barrel enzymes"/>
    <property type="match status" value="2"/>
</dbReference>
<dbReference type="HAMAP" id="MF_00106">
    <property type="entry name" value="UxuA"/>
    <property type="match status" value="1"/>
</dbReference>
<dbReference type="InterPro" id="IPR004628">
    <property type="entry name" value="Man_deHydtase"/>
</dbReference>
<dbReference type="InterPro" id="IPR036237">
    <property type="entry name" value="Xyl_isomerase-like_sf"/>
</dbReference>
<dbReference type="NCBIfam" id="NF003027">
    <property type="entry name" value="PRK03906.1"/>
    <property type="match status" value="1"/>
</dbReference>
<dbReference type="NCBIfam" id="TIGR00695">
    <property type="entry name" value="uxuA"/>
    <property type="match status" value="1"/>
</dbReference>
<dbReference type="PANTHER" id="PTHR30387">
    <property type="entry name" value="MANNONATE DEHYDRATASE"/>
    <property type="match status" value="1"/>
</dbReference>
<dbReference type="PANTHER" id="PTHR30387:SF2">
    <property type="entry name" value="MANNONATE DEHYDRATASE"/>
    <property type="match status" value="1"/>
</dbReference>
<dbReference type="Pfam" id="PF03786">
    <property type="entry name" value="UxuA"/>
    <property type="match status" value="1"/>
</dbReference>
<dbReference type="PIRSF" id="PIRSF016049">
    <property type="entry name" value="Man_dehyd"/>
    <property type="match status" value="1"/>
</dbReference>
<dbReference type="SUPFAM" id="SSF51658">
    <property type="entry name" value="Xylose isomerase-like"/>
    <property type="match status" value="1"/>
</dbReference>
<evidence type="ECO:0000255" key="1">
    <source>
        <dbReference type="HAMAP-Rule" id="MF_00106"/>
    </source>
</evidence>
<protein>
    <recommendedName>
        <fullName evidence="1">Mannonate dehydratase</fullName>
        <ecNumber evidence="1">4.2.1.8</ecNumber>
    </recommendedName>
    <alternativeName>
        <fullName evidence="1">D-mannonate hydro-lyase</fullName>
    </alternativeName>
</protein>
<keyword id="KW-0408">Iron</keyword>
<keyword id="KW-0456">Lyase</keyword>
<keyword id="KW-0464">Manganese</keyword>
<sequence>MEQTWRWYGPNDPVSLADVRQAGATGVVTALHHIPNGEVWSVEEILKRKAIIEDAGLVWSVVESVPIHEDIKTHTGNYEQWIANYQQTLRNLAQCGIRTVCYNFMPVLDWTRTDLEYVLPDGSKALRFDQIEFAAFEMHILKRPGAEADYTEEEIAQAAERFATMSDEDKARLTRNIIAGLPGAEEGYTLDQFRKHLELYKDIDKAKLRENFAVFLKAIIPVAEEVGVRMAVHPDDPPRPILGLPRIVSTIEDMQWMVDTVNSMANGFTMCTGSYGVRADNDLVDMIKQFGPRIYFTHLRSTMREDNPKTFHEAAHLNGDVDMYEVVKAIVEEEHRRKAEGKEDLIPMRPDHGHQMLDDLKKKTNPGYSAIGRLKGLAEVRGVELAIQRAFFSR</sequence>
<feature type="chain" id="PRO_1000202868" description="Mannonate dehydratase">
    <location>
        <begin position="1"/>
        <end position="394"/>
    </location>
</feature>
<reference key="1">
    <citation type="journal article" date="2009" name="J. Bacteriol.">
        <title>Genomic sequencing reveals regulatory mutations and recombinational events in the widely used MC4100 lineage of Escherichia coli K-12.</title>
        <authorList>
            <person name="Ferenci T."/>
            <person name="Zhou Z."/>
            <person name="Betteridge T."/>
            <person name="Ren Y."/>
            <person name="Liu Y."/>
            <person name="Feng L."/>
            <person name="Reeves P.R."/>
            <person name="Wang L."/>
        </authorList>
    </citation>
    <scope>NUCLEOTIDE SEQUENCE [LARGE SCALE GENOMIC DNA]</scope>
    <source>
        <strain>K12 / MC4100 / BW2952</strain>
    </source>
</reference>
<proteinExistence type="inferred from homology"/>
<name>UXUA_ECOBW</name>